<organism>
    <name type="scientific">Cyanidium caldarium</name>
    <name type="common">Red alga</name>
    <dbReference type="NCBI Taxonomy" id="2771"/>
    <lineage>
        <taxon>Eukaryota</taxon>
        <taxon>Rhodophyta</taxon>
        <taxon>Bangiophyceae</taxon>
        <taxon>Cyanidiales</taxon>
        <taxon>Cyanidiaceae</taxon>
        <taxon>Cyanidium</taxon>
    </lineage>
</organism>
<geneLocation type="chloroplast"/>
<proteinExistence type="inferred from homology"/>
<gene>
    <name evidence="1" type="primary">atpB</name>
</gene>
<name>ATPB_CYACA</name>
<keyword id="KW-0066">ATP synthesis</keyword>
<keyword id="KW-0067">ATP-binding</keyword>
<keyword id="KW-0139">CF(1)</keyword>
<keyword id="KW-0150">Chloroplast</keyword>
<keyword id="KW-0375">Hydrogen ion transport</keyword>
<keyword id="KW-0406">Ion transport</keyword>
<keyword id="KW-0472">Membrane</keyword>
<keyword id="KW-0547">Nucleotide-binding</keyword>
<keyword id="KW-0934">Plastid</keyword>
<keyword id="KW-0793">Thylakoid</keyword>
<keyword id="KW-1278">Translocase</keyword>
<keyword id="KW-0813">Transport</keyword>
<feature type="chain" id="PRO_0000144508" description="ATP synthase subunit beta, chloroplastic">
    <location>
        <begin position="1"/>
        <end position="490"/>
    </location>
</feature>
<feature type="binding site" evidence="1">
    <location>
        <begin position="169"/>
        <end position="176"/>
    </location>
    <ligand>
        <name>ATP</name>
        <dbReference type="ChEBI" id="CHEBI:30616"/>
    </ligand>
</feature>
<evidence type="ECO:0000255" key="1">
    <source>
        <dbReference type="HAMAP-Rule" id="MF_01347"/>
    </source>
</evidence>
<accession>Q9TM41</accession>
<sequence length="490" mass="53277">MKPCQLKQKQKTLAIAKVNNKGKVIQIIGPVLDIVFPDGQLPKVFNAIKINNSNNNWITCEVQQLLGDNKVRAVAMSTTEGLKRGASAIDTGEPISIPVGKETLGRIFNVLGEPIDEKGPVISNDKLPIHRPAPKFTQLETKPSIFETGIKVVDLLAPYRRGGKIGLFGGAGVGKTVLIMELINNVAKAHGGVSVFGGVGERTREGNDLYQEMKESGVINEKDLNLSKVALCYGQMNEPPGARMRVGLTALTMAEYFRDVNKQNVLLFIDNIFRFVQAGSEVSALLGRMPSAVGYQPTLGTEMGALQERITSTLDGSITSIQAVYVPADDLTDPAPATTFAHLDATTVLSRALAAKGIYPAVDPLDSTSTMLQPGIVSDEHYTTARKVKETLQRYKELQDIIAILGLDELSEEDRLIVSRARKIEKFLSQPFFVAEVFTGISGKYVSLSDSIKGFNMILSGEVDNIPEQAFYLVGRIEEAIDKAKQVEKS</sequence>
<comment type="function">
    <text evidence="1">Produces ATP from ADP in the presence of a proton gradient across the membrane. The catalytic sites are hosted primarily by the beta subunits.</text>
</comment>
<comment type="catalytic activity">
    <reaction evidence="1">
        <text>ATP + H2O + 4 H(+)(in) = ADP + phosphate + 5 H(+)(out)</text>
        <dbReference type="Rhea" id="RHEA:57720"/>
        <dbReference type="ChEBI" id="CHEBI:15377"/>
        <dbReference type="ChEBI" id="CHEBI:15378"/>
        <dbReference type="ChEBI" id="CHEBI:30616"/>
        <dbReference type="ChEBI" id="CHEBI:43474"/>
        <dbReference type="ChEBI" id="CHEBI:456216"/>
        <dbReference type="EC" id="7.1.2.2"/>
    </reaction>
</comment>
<comment type="subunit">
    <text evidence="1">F-type ATPases have 2 components, CF(1) - the catalytic core - and CF(0) - the membrane proton channel. CF(1) has five subunits: alpha(3), beta(3), gamma(1), delta(1), epsilon(1). CF(0) has four main subunits: a(1), b(1), b'(1) and c(9-12).</text>
</comment>
<comment type="subcellular location">
    <subcellularLocation>
        <location evidence="1">Plastid</location>
        <location evidence="1">Chloroplast thylakoid membrane</location>
        <topology evidence="1">Peripheral membrane protein</topology>
    </subcellularLocation>
</comment>
<comment type="similarity">
    <text evidence="1">Belongs to the ATPase alpha/beta chains family.</text>
</comment>
<dbReference type="EC" id="7.1.2.2" evidence="1"/>
<dbReference type="EMBL" id="AF022186">
    <property type="protein sequence ID" value="AAF13020.1"/>
    <property type="molecule type" value="Genomic_DNA"/>
</dbReference>
<dbReference type="RefSeq" id="NP_045025.1">
    <property type="nucleotide sequence ID" value="NC_001840.1"/>
</dbReference>
<dbReference type="SMR" id="Q9TM41"/>
<dbReference type="GeneID" id="800237"/>
<dbReference type="GO" id="GO:0009535">
    <property type="term" value="C:chloroplast thylakoid membrane"/>
    <property type="evidence" value="ECO:0007669"/>
    <property type="project" value="UniProtKB-SubCell"/>
</dbReference>
<dbReference type="GO" id="GO:0005739">
    <property type="term" value="C:mitochondrion"/>
    <property type="evidence" value="ECO:0007669"/>
    <property type="project" value="GOC"/>
</dbReference>
<dbReference type="GO" id="GO:0045259">
    <property type="term" value="C:proton-transporting ATP synthase complex"/>
    <property type="evidence" value="ECO:0007669"/>
    <property type="project" value="UniProtKB-KW"/>
</dbReference>
<dbReference type="GO" id="GO:0005524">
    <property type="term" value="F:ATP binding"/>
    <property type="evidence" value="ECO:0007669"/>
    <property type="project" value="UniProtKB-UniRule"/>
</dbReference>
<dbReference type="GO" id="GO:0016887">
    <property type="term" value="F:ATP hydrolysis activity"/>
    <property type="evidence" value="ECO:0007669"/>
    <property type="project" value="InterPro"/>
</dbReference>
<dbReference type="GO" id="GO:0046933">
    <property type="term" value="F:proton-transporting ATP synthase activity, rotational mechanism"/>
    <property type="evidence" value="ECO:0007669"/>
    <property type="project" value="UniProtKB-UniRule"/>
</dbReference>
<dbReference type="GO" id="GO:0042776">
    <property type="term" value="P:proton motive force-driven mitochondrial ATP synthesis"/>
    <property type="evidence" value="ECO:0007669"/>
    <property type="project" value="TreeGrafter"/>
</dbReference>
<dbReference type="CDD" id="cd18110">
    <property type="entry name" value="ATP-synt_F1_beta_C"/>
    <property type="match status" value="1"/>
</dbReference>
<dbReference type="CDD" id="cd18115">
    <property type="entry name" value="ATP-synt_F1_beta_N"/>
    <property type="match status" value="1"/>
</dbReference>
<dbReference type="CDD" id="cd01133">
    <property type="entry name" value="F1-ATPase_beta_CD"/>
    <property type="match status" value="1"/>
</dbReference>
<dbReference type="FunFam" id="1.10.1140.10:FF:000001">
    <property type="entry name" value="ATP synthase subunit beta"/>
    <property type="match status" value="1"/>
</dbReference>
<dbReference type="FunFam" id="3.40.50.300:FF:000026">
    <property type="entry name" value="ATP synthase subunit beta"/>
    <property type="match status" value="1"/>
</dbReference>
<dbReference type="Gene3D" id="2.40.10.170">
    <property type="match status" value="1"/>
</dbReference>
<dbReference type="Gene3D" id="1.10.1140.10">
    <property type="entry name" value="Bovine Mitochondrial F1-atpase, Atp Synthase Beta Chain, Chain D, domain 3"/>
    <property type="match status" value="1"/>
</dbReference>
<dbReference type="Gene3D" id="3.40.50.300">
    <property type="entry name" value="P-loop containing nucleotide triphosphate hydrolases"/>
    <property type="match status" value="1"/>
</dbReference>
<dbReference type="HAMAP" id="MF_01347">
    <property type="entry name" value="ATP_synth_beta_bact"/>
    <property type="match status" value="1"/>
</dbReference>
<dbReference type="InterPro" id="IPR003593">
    <property type="entry name" value="AAA+_ATPase"/>
</dbReference>
<dbReference type="InterPro" id="IPR055190">
    <property type="entry name" value="ATP-synt_VA_C"/>
</dbReference>
<dbReference type="InterPro" id="IPR005722">
    <property type="entry name" value="ATP_synth_F1_bsu"/>
</dbReference>
<dbReference type="InterPro" id="IPR020003">
    <property type="entry name" value="ATPase_a/bsu_AS"/>
</dbReference>
<dbReference type="InterPro" id="IPR050053">
    <property type="entry name" value="ATPase_alpha/beta_chains"/>
</dbReference>
<dbReference type="InterPro" id="IPR004100">
    <property type="entry name" value="ATPase_F1/V1/A1_a/bsu_N"/>
</dbReference>
<dbReference type="InterPro" id="IPR036121">
    <property type="entry name" value="ATPase_F1/V1/A1_a/bsu_N_sf"/>
</dbReference>
<dbReference type="InterPro" id="IPR000194">
    <property type="entry name" value="ATPase_F1/V1/A1_a/bsu_nucl-bd"/>
</dbReference>
<dbReference type="InterPro" id="IPR024034">
    <property type="entry name" value="ATPase_F1/V1_b/a_C"/>
</dbReference>
<dbReference type="InterPro" id="IPR027417">
    <property type="entry name" value="P-loop_NTPase"/>
</dbReference>
<dbReference type="NCBIfam" id="TIGR01039">
    <property type="entry name" value="atpD"/>
    <property type="match status" value="1"/>
</dbReference>
<dbReference type="PANTHER" id="PTHR15184">
    <property type="entry name" value="ATP SYNTHASE"/>
    <property type="match status" value="1"/>
</dbReference>
<dbReference type="PANTHER" id="PTHR15184:SF71">
    <property type="entry name" value="ATP SYNTHASE SUBUNIT BETA, MITOCHONDRIAL"/>
    <property type="match status" value="1"/>
</dbReference>
<dbReference type="Pfam" id="PF00006">
    <property type="entry name" value="ATP-synt_ab"/>
    <property type="match status" value="1"/>
</dbReference>
<dbReference type="Pfam" id="PF02874">
    <property type="entry name" value="ATP-synt_ab_N"/>
    <property type="match status" value="1"/>
</dbReference>
<dbReference type="Pfam" id="PF22919">
    <property type="entry name" value="ATP-synt_VA_C"/>
    <property type="match status" value="1"/>
</dbReference>
<dbReference type="SMART" id="SM00382">
    <property type="entry name" value="AAA"/>
    <property type="match status" value="1"/>
</dbReference>
<dbReference type="SUPFAM" id="SSF47917">
    <property type="entry name" value="C-terminal domain of alpha and beta subunits of F1 ATP synthase"/>
    <property type="match status" value="1"/>
</dbReference>
<dbReference type="SUPFAM" id="SSF50615">
    <property type="entry name" value="N-terminal domain of alpha and beta subunits of F1 ATP synthase"/>
    <property type="match status" value="1"/>
</dbReference>
<dbReference type="SUPFAM" id="SSF52540">
    <property type="entry name" value="P-loop containing nucleoside triphosphate hydrolases"/>
    <property type="match status" value="1"/>
</dbReference>
<dbReference type="PROSITE" id="PS00152">
    <property type="entry name" value="ATPASE_ALPHA_BETA"/>
    <property type="match status" value="1"/>
</dbReference>
<reference key="1">
    <citation type="journal article" date="2000" name="J. Mol. Evol.">
        <title>The structure and gene repertoire of an ancient red algal plastid genome.</title>
        <authorList>
            <person name="Gloeckner G."/>
            <person name="Rosenthal A."/>
            <person name="Valentin K.-U."/>
        </authorList>
    </citation>
    <scope>NUCLEOTIDE SEQUENCE [LARGE SCALE GENOMIC DNA]</scope>
    <source>
        <strain>RK-1</strain>
    </source>
</reference>
<protein>
    <recommendedName>
        <fullName evidence="1">ATP synthase subunit beta, chloroplastic</fullName>
        <ecNumber evidence="1">7.1.2.2</ecNumber>
    </recommendedName>
    <alternativeName>
        <fullName evidence="1">ATP synthase F1 sector subunit beta</fullName>
    </alternativeName>
    <alternativeName>
        <fullName evidence="1">F-ATPase subunit beta</fullName>
    </alternativeName>
</protein>